<accession>P63610</accession>
<accession>Q8XCQ4</accession>
<dbReference type="EC" id="4.2.3.5" evidence="2"/>
<dbReference type="EMBL" id="AE005174">
    <property type="protein sequence ID" value="AAG57458.1"/>
    <property type="molecule type" value="Genomic_DNA"/>
</dbReference>
<dbReference type="EMBL" id="BA000007">
    <property type="protein sequence ID" value="BAB36636.1"/>
    <property type="molecule type" value="Genomic_DNA"/>
</dbReference>
<dbReference type="PIR" id="E91030">
    <property type="entry name" value="E91030"/>
</dbReference>
<dbReference type="PIR" id="F85874">
    <property type="entry name" value="F85874"/>
</dbReference>
<dbReference type="RefSeq" id="NP_311240.1">
    <property type="nucleotide sequence ID" value="NC_002695.1"/>
</dbReference>
<dbReference type="RefSeq" id="WP_001297933.1">
    <property type="nucleotide sequence ID" value="NZ_VOAI01000001.1"/>
</dbReference>
<dbReference type="SMR" id="P63610"/>
<dbReference type="STRING" id="155864.Z3592"/>
<dbReference type="GeneID" id="915691"/>
<dbReference type="KEGG" id="ece:Z3592"/>
<dbReference type="KEGG" id="ecs:ECs_3213"/>
<dbReference type="PATRIC" id="fig|386585.9.peg.3354"/>
<dbReference type="eggNOG" id="COG0082">
    <property type="taxonomic scope" value="Bacteria"/>
</dbReference>
<dbReference type="HOGENOM" id="CLU_034547_0_2_6"/>
<dbReference type="OMA" id="MLSINAV"/>
<dbReference type="UniPathway" id="UPA00053">
    <property type="reaction ID" value="UER00090"/>
</dbReference>
<dbReference type="Proteomes" id="UP000000558">
    <property type="component" value="Chromosome"/>
</dbReference>
<dbReference type="Proteomes" id="UP000002519">
    <property type="component" value="Chromosome"/>
</dbReference>
<dbReference type="GO" id="GO:0005829">
    <property type="term" value="C:cytosol"/>
    <property type="evidence" value="ECO:0007669"/>
    <property type="project" value="TreeGrafter"/>
</dbReference>
<dbReference type="GO" id="GO:0004107">
    <property type="term" value="F:chorismate synthase activity"/>
    <property type="evidence" value="ECO:0007669"/>
    <property type="project" value="UniProtKB-UniRule"/>
</dbReference>
<dbReference type="GO" id="GO:0010181">
    <property type="term" value="F:FMN binding"/>
    <property type="evidence" value="ECO:0007669"/>
    <property type="project" value="TreeGrafter"/>
</dbReference>
<dbReference type="GO" id="GO:0008652">
    <property type="term" value="P:amino acid biosynthetic process"/>
    <property type="evidence" value="ECO:0007669"/>
    <property type="project" value="UniProtKB-KW"/>
</dbReference>
<dbReference type="GO" id="GO:0009073">
    <property type="term" value="P:aromatic amino acid family biosynthetic process"/>
    <property type="evidence" value="ECO:0007669"/>
    <property type="project" value="UniProtKB-KW"/>
</dbReference>
<dbReference type="GO" id="GO:0009423">
    <property type="term" value="P:chorismate biosynthetic process"/>
    <property type="evidence" value="ECO:0007669"/>
    <property type="project" value="UniProtKB-UniRule"/>
</dbReference>
<dbReference type="CDD" id="cd07304">
    <property type="entry name" value="Chorismate_synthase"/>
    <property type="match status" value="1"/>
</dbReference>
<dbReference type="FunFam" id="3.60.150.10:FF:000001">
    <property type="entry name" value="Chorismate synthase"/>
    <property type="match status" value="1"/>
</dbReference>
<dbReference type="Gene3D" id="3.60.150.10">
    <property type="entry name" value="Chorismate synthase AroC"/>
    <property type="match status" value="1"/>
</dbReference>
<dbReference type="HAMAP" id="MF_00300">
    <property type="entry name" value="Chorismate_synth"/>
    <property type="match status" value="1"/>
</dbReference>
<dbReference type="InterPro" id="IPR000453">
    <property type="entry name" value="Chorismate_synth"/>
</dbReference>
<dbReference type="InterPro" id="IPR035904">
    <property type="entry name" value="Chorismate_synth_AroC_sf"/>
</dbReference>
<dbReference type="InterPro" id="IPR020541">
    <property type="entry name" value="Chorismate_synthase_CS"/>
</dbReference>
<dbReference type="NCBIfam" id="TIGR00033">
    <property type="entry name" value="aroC"/>
    <property type="match status" value="1"/>
</dbReference>
<dbReference type="NCBIfam" id="NF003793">
    <property type="entry name" value="PRK05382.1"/>
    <property type="match status" value="1"/>
</dbReference>
<dbReference type="PANTHER" id="PTHR21085">
    <property type="entry name" value="CHORISMATE SYNTHASE"/>
    <property type="match status" value="1"/>
</dbReference>
<dbReference type="PANTHER" id="PTHR21085:SF0">
    <property type="entry name" value="CHORISMATE SYNTHASE"/>
    <property type="match status" value="1"/>
</dbReference>
<dbReference type="Pfam" id="PF01264">
    <property type="entry name" value="Chorismate_synt"/>
    <property type="match status" value="1"/>
</dbReference>
<dbReference type="PIRSF" id="PIRSF001456">
    <property type="entry name" value="Chorismate_synth"/>
    <property type="match status" value="1"/>
</dbReference>
<dbReference type="SUPFAM" id="SSF103263">
    <property type="entry name" value="Chorismate synthase, AroC"/>
    <property type="match status" value="1"/>
</dbReference>
<dbReference type="PROSITE" id="PS00787">
    <property type="entry name" value="CHORISMATE_SYNTHASE_1"/>
    <property type="match status" value="1"/>
</dbReference>
<dbReference type="PROSITE" id="PS00788">
    <property type="entry name" value="CHORISMATE_SYNTHASE_2"/>
    <property type="match status" value="1"/>
</dbReference>
<dbReference type="PROSITE" id="PS00789">
    <property type="entry name" value="CHORISMATE_SYNTHASE_3"/>
    <property type="match status" value="1"/>
</dbReference>
<gene>
    <name evidence="2" type="primary">aroC</name>
    <name type="ordered locus">Z3592</name>
    <name type="ordered locus">ECs3213</name>
</gene>
<proteinExistence type="inferred from homology"/>
<feature type="initiator methionine" description="Removed" evidence="1">
    <location>
        <position position="1"/>
    </location>
</feature>
<feature type="chain" id="PRO_0000140586" description="Chorismate synthase">
    <location>
        <begin position="2"/>
        <end position="361"/>
    </location>
</feature>
<feature type="binding site" evidence="2">
    <location>
        <position position="48"/>
    </location>
    <ligand>
        <name>NADP(+)</name>
        <dbReference type="ChEBI" id="CHEBI:58349"/>
    </ligand>
</feature>
<feature type="binding site" evidence="2">
    <location>
        <position position="54"/>
    </location>
    <ligand>
        <name>NADP(+)</name>
        <dbReference type="ChEBI" id="CHEBI:58349"/>
    </ligand>
</feature>
<feature type="binding site" evidence="2">
    <location>
        <begin position="125"/>
        <end position="127"/>
    </location>
    <ligand>
        <name>FMN</name>
        <dbReference type="ChEBI" id="CHEBI:58210"/>
    </ligand>
</feature>
<feature type="binding site" evidence="2">
    <location>
        <begin position="238"/>
        <end position="239"/>
    </location>
    <ligand>
        <name>FMN</name>
        <dbReference type="ChEBI" id="CHEBI:58210"/>
    </ligand>
</feature>
<feature type="binding site" evidence="2">
    <location>
        <position position="278"/>
    </location>
    <ligand>
        <name>FMN</name>
        <dbReference type="ChEBI" id="CHEBI:58210"/>
    </ligand>
</feature>
<feature type="binding site" evidence="2">
    <location>
        <begin position="293"/>
        <end position="297"/>
    </location>
    <ligand>
        <name>FMN</name>
        <dbReference type="ChEBI" id="CHEBI:58210"/>
    </ligand>
</feature>
<feature type="binding site" evidence="2">
    <location>
        <position position="319"/>
    </location>
    <ligand>
        <name>FMN</name>
        <dbReference type="ChEBI" id="CHEBI:58210"/>
    </ligand>
</feature>
<sequence>MAGNTIGQLFRVTTFGESHGLALGCIVDGVPPGIPLTEADLQHDLDRRRPGTSRYTTQRREPDQVKILSGVFEGVTTGTSIGLLIENTDQRSQDYSAIKDVFRPGHADYTYEQKYGLRDYRGGGRSSARETAMRVAAGAIAKKYLAEKFGIEIRGCLTQMGDIPLEIKDWSQVEQNPFFCPDPDKIDALDELMRALKKEGDSIGAKVTVVASGVPAGLGEPVFDRLDADIAHALMSINAVKGVEIGDGFDVVALRGSQNRDEITKDGFQSNHAGGILGGISSGQQIIAHMALKPTSSITVPGRTINRFGEEVEMITKGRHDPCVGIRAVPIAEAMLAIVLMDHLLRQRAQNADVKTDIPRW</sequence>
<reference key="1">
    <citation type="journal article" date="2001" name="Nature">
        <title>Genome sequence of enterohaemorrhagic Escherichia coli O157:H7.</title>
        <authorList>
            <person name="Perna N.T."/>
            <person name="Plunkett G. III"/>
            <person name="Burland V."/>
            <person name="Mau B."/>
            <person name="Glasner J.D."/>
            <person name="Rose D.J."/>
            <person name="Mayhew G.F."/>
            <person name="Evans P.S."/>
            <person name="Gregor J."/>
            <person name="Kirkpatrick H.A."/>
            <person name="Posfai G."/>
            <person name="Hackett J."/>
            <person name="Klink S."/>
            <person name="Boutin A."/>
            <person name="Shao Y."/>
            <person name="Miller L."/>
            <person name="Grotbeck E.J."/>
            <person name="Davis N.W."/>
            <person name="Lim A."/>
            <person name="Dimalanta E.T."/>
            <person name="Potamousis K."/>
            <person name="Apodaca J."/>
            <person name="Anantharaman T.S."/>
            <person name="Lin J."/>
            <person name="Yen G."/>
            <person name="Schwartz D.C."/>
            <person name="Welch R.A."/>
            <person name="Blattner F.R."/>
        </authorList>
    </citation>
    <scope>NUCLEOTIDE SEQUENCE [LARGE SCALE GENOMIC DNA]</scope>
    <source>
        <strain>O157:H7 / EDL933 / ATCC 700927 / EHEC</strain>
    </source>
</reference>
<reference key="2">
    <citation type="journal article" date="2001" name="DNA Res.">
        <title>Complete genome sequence of enterohemorrhagic Escherichia coli O157:H7 and genomic comparison with a laboratory strain K-12.</title>
        <authorList>
            <person name="Hayashi T."/>
            <person name="Makino K."/>
            <person name="Ohnishi M."/>
            <person name="Kurokawa K."/>
            <person name="Ishii K."/>
            <person name="Yokoyama K."/>
            <person name="Han C.-G."/>
            <person name="Ohtsubo E."/>
            <person name="Nakayama K."/>
            <person name="Murata T."/>
            <person name="Tanaka M."/>
            <person name="Tobe T."/>
            <person name="Iida T."/>
            <person name="Takami H."/>
            <person name="Honda T."/>
            <person name="Sasakawa C."/>
            <person name="Ogasawara N."/>
            <person name="Yasunaga T."/>
            <person name="Kuhara S."/>
            <person name="Shiba T."/>
            <person name="Hattori M."/>
            <person name="Shinagawa H."/>
        </authorList>
    </citation>
    <scope>NUCLEOTIDE SEQUENCE [LARGE SCALE GENOMIC DNA]</scope>
    <source>
        <strain>O157:H7 / Sakai / RIMD 0509952 / EHEC</strain>
    </source>
</reference>
<evidence type="ECO:0000250" key="1"/>
<evidence type="ECO:0000255" key="2">
    <source>
        <dbReference type="HAMAP-Rule" id="MF_00300"/>
    </source>
</evidence>
<name>AROC_ECO57</name>
<comment type="function">
    <text evidence="2">Catalyzes the anti-1,4-elimination of the C-3 phosphate and the C-6 proR hydrogen from 5-enolpyruvylshikimate-3-phosphate (EPSP) to yield chorismate, which is the branch point compound that serves as the starting substrate for the three terminal pathways of aromatic amino acid biosynthesis. This reaction introduces a second double bond into the aromatic ring system.</text>
</comment>
<comment type="catalytic activity">
    <reaction evidence="2">
        <text>5-O-(1-carboxyvinyl)-3-phosphoshikimate = chorismate + phosphate</text>
        <dbReference type="Rhea" id="RHEA:21020"/>
        <dbReference type="ChEBI" id="CHEBI:29748"/>
        <dbReference type="ChEBI" id="CHEBI:43474"/>
        <dbReference type="ChEBI" id="CHEBI:57701"/>
        <dbReference type="EC" id="4.2.3.5"/>
    </reaction>
</comment>
<comment type="cofactor">
    <cofactor evidence="2">
        <name>FMNH2</name>
        <dbReference type="ChEBI" id="CHEBI:57618"/>
    </cofactor>
    <text evidence="2">Reduced FMN (FMNH(2)).</text>
</comment>
<comment type="pathway">
    <text evidence="2">Metabolic intermediate biosynthesis; chorismate biosynthesis; chorismate from D-erythrose 4-phosphate and phosphoenolpyruvate: step 7/7.</text>
</comment>
<comment type="subunit">
    <text evidence="2">Homotetramer.</text>
</comment>
<comment type="similarity">
    <text evidence="2">Belongs to the chorismate synthase family.</text>
</comment>
<keyword id="KW-0028">Amino-acid biosynthesis</keyword>
<keyword id="KW-0057">Aromatic amino acid biosynthesis</keyword>
<keyword id="KW-0274">FAD</keyword>
<keyword id="KW-0285">Flavoprotein</keyword>
<keyword id="KW-0288">FMN</keyword>
<keyword id="KW-0456">Lyase</keyword>
<keyword id="KW-0521">NADP</keyword>
<keyword id="KW-1185">Reference proteome</keyword>
<organism>
    <name type="scientific">Escherichia coli O157:H7</name>
    <dbReference type="NCBI Taxonomy" id="83334"/>
    <lineage>
        <taxon>Bacteria</taxon>
        <taxon>Pseudomonadati</taxon>
        <taxon>Pseudomonadota</taxon>
        <taxon>Gammaproteobacteria</taxon>
        <taxon>Enterobacterales</taxon>
        <taxon>Enterobacteriaceae</taxon>
        <taxon>Escherichia</taxon>
    </lineage>
</organism>
<protein>
    <recommendedName>
        <fullName evidence="2">Chorismate synthase</fullName>
        <shortName evidence="2">CS</shortName>
        <ecNumber evidence="2">4.2.3.5</ecNumber>
    </recommendedName>
    <alternativeName>
        <fullName evidence="2">5-enolpyruvylshikimate-3-phosphate phospholyase</fullName>
    </alternativeName>
</protein>